<name>SMD1_DROME</name>
<keyword id="KW-0963">Cytoplasm</keyword>
<keyword id="KW-0488">Methylation</keyword>
<keyword id="KW-0507">mRNA processing</keyword>
<keyword id="KW-0508">mRNA splicing</keyword>
<keyword id="KW-0539">Nucleus</keyword>
<keyword id="KW-1185">Reference proteome</keyword>
<keyword id="KW-0677">Repeat</keyword>
<keyword id="KW-0687">Ribonucleoprotein</keyword>
<keyword id="KW-0747">Spliceosome</keyword>
<protein>
    <recommendedName>
        <fullName>Probable small nuclear ribonucleoprotein Sm D1</fullName>
        <shortName>Sm-D1</shortName>
    </recommendedName>
    <alternativeName>
        <fullName>snRNP core protein D1</fullName>
    </alternativeName>
</protein>
<accession>Q9VU02</accession>
<accession>B3DML3</accession>
<accession>Q8SYR6</accession>
<dbReference type="EMBL" id="AE014296">
    <property type="protein sequence ID" value="AAF49893.1"/>
    <property type="molecule type" value="Genomic_DNA"/>
</dbReference>
<dbReference type="EMBL" id="AY071359">
    <property type="protein sequence ID" value="AAL48981.1"/>
    <property type="molecule type" value="mRNA"/>
</dbReference>
<dbReference type="EMBL" id="BT032651">
    <property type="protein sequence ID" value="ACD81665.1"/>
    <property type="molecule type" value="mRNA"/>
</dbReference>
<dbReference type="RefSeq" id="NP_524774.1">
    <property type="nucleotide sequence ID" value="NM_080035.3"/>
</dbReference>
<dbReference type="SMR" id="Q9VU02"/>
<dbReference type="BioGRID" id="69191">
    <property type="interactions" value="53"/>
</dbReference>
<dbReference type="DIP" id="DIP-18826N"/>
<dbReference type="FunCoup" id="Q9VU02">
    <property type="interactions" value="2125"/>
</dbReference>
<dbReference type="IntAct" id="Q9VU02">
    <property type="interactions" value="28"/>
</dbReference>
<dbReference type="STRING" id="7227.FBpp0075684"/>
<dbReference type="PaxDb" id="7227-FBpp0075684"/>
<dbReference type="DNASU" id="44668"/>
<dbReference type="EnsemblMetazoa" id="FBtr0075952">
    <property type="protein sequence ID" value="FBpp0075684"/>
    <property type="gene ID" value="FBgn0261933"/>
</dbReference>
<dbReference type="GeneID" id="44668"/>
<dbReference type="KEGG" id="dme:Dmel_CG10753"/>
<dbReference type="AGR" id="FB:FBgn0261933"/>
<dbReference type="CTD" id="44668"/>
<dbReference type="FlyBase" id="FBgn0261933">
    <property type="gene designation" value="SmD1"/>
</dbReference>
<dbReference type="VEuPathDB" id="VectorBase:FBgn0261933"/>
<dbReference type="eggNOG" id="KOG3428">
    <property type="taxonomic scope" value="Eukaryota"/>
</dbReference>
<dbReference type="GeneTree" id="ENSGT00510000047245"/>
<dbReference type="HOGENOM" id="CLU_123956_3_0_1"/>
<dbReference type="InParanoid" id="Q9VU02"/>
<dbReference type="OMA" id="TFLMKLT"/>
<dbReference type="OrthoDB" id="9626941at2759"/>
<dbReference type="PhylomeDB" id="Q9VU02"/>
<dbReference type="Reactome" id="R-DME-72163">
    <property type="pathway name" value="mRNA Splicing - Major Pathway"/>
</dbReference>
<dbReference type="Reactome" id="R-DME-72165">
    <property type="pathway name" value="mRNA Splicing - Minor Pathway"/>
</dbReference>
<dbReference type="BioGRID-ORCS" id="44668">
    <property type="hits" value="0 hits in 1 CRISPR screen"/>
</dbReference>
<dbReference type="GenomeRNAi" id="44668"/>
<dbReference type="PRO" id="PR:Q9VU02"/>
<dbReference type="Proteomes" id="UP000000803">
    <property type="component" value="Chromosome 3L"/>
</dbReference>
<dbReference type="Bgee" id="FBgn0261933">
    <property type="expression patterns" value="Expressed in spermatocyte in testis and 97 other cell types or tissues"/>
</dbReference>
<dbReference type="GO" id="GO:0071013">
    <property type="term" value="C:catalytic step 2 spliceosome"/>
    <property type="evidence" value="ECO:0007005"/>
    <property type="project" value="FlyBase"/>
</dbReference>
<dbReference type="GO" id="GO:0000243">
    <property type="term" value="C:commitment complex"/>
    <property type="evidence" value="ECO:0000318"/>
    <property type="project" value="GO_Central"/>
</dbReference>
<dbReference type="GO" id="GO:0005829">
    <property type="term" value="C:cytosol"/>
    <property type="evidence" value="ECO:0007005"/>
    <property type="project" value="FlyBase"/>
</dbReference>
<dbReference type="GO" id="GO:0005634">
    <property type="term" value="C:nucleus"/>
    <property type="evidence" value="ECO:0000314"/>
    <property type="project" value="FlyBase"/>
</dbReference>
<dbReference type="GO" id="GO:0034715">
    <property type="term" value="C:pICln-Sm protein complex"/>
    <property type="evidence" value="ECO:0000318"/>
    <property type="project" value="GO_Central"/>
</dbReference>
<dbReference type="GO" id="GO:0071011">
    <property type="term" value="C:precatalytic spliceosome"/>
    <property type="evidence" value="ECO:0007005"/>
    <property type="project" value="FlyBase"/>
</dbReference>
<dbReference type="GO" id="GO:0030532">
    <property type="term" value="C:small nuclear ribonucleoprotein complex"/>
    <property type="evidence" value="ECO:0000250"/>
    <property type="project" value="UniProtKB"/>
</dbReference>
<dbReference type="GO" id="GO:0034719">
    <property type="term" value="C:SMN-Sm protein complex"/>
    <property type="evidence" value="ECO:0000318"/>
    <property type="project" value="GO_Central"/>
</dbReference>
<dbReference type="GO" id="GO:0005681">
    <property type="term" value="C:spliceosomal complex"/>
    <property type="evidence" value="ECO:0000250"/>
    <property type="project" value="FlyBase"/>
</dbReference>
<dbReference type="GO" id="GO:0097526">
    <property type="term" value="C:spliceosomal tri-snRNP complex"/>
    <property type="evidence" value="ECO:0000318"/>
    <property type="project" value="GO_Central"/>
</dbReference>
<dbReference type="GO" id="GO:0005685">
    <property type="term" value="C:U1 snRNP"/>
    <property type="evidence" value="ECO:0000318"/>
    <property type="project" value="GO_Central"/>
</dbReference>
<dbReference type="GO" id="GO:0005686">
    <property type="term" value="C:U2 snRNP"/>
    <property type="evidence" value="ECO:0000318"/>
    <property type="project" value="GO_Central"/>
</dbReference>
<dbReference type="GO" id="GO:0005687">
    <property type="term" value="C:U4 snRNP"/>
    <property type="evidence" value="ECO:0000318"/>
    <property type="project" value="GO_Central"/>
</dbReference>
<dbReference type="GO" id="GO:0005682">
    <property type="term" value="C:U5 snRNP"/>
    <property type="evidence" value="ECO:0000318"/>
    <property type="project" value="GO_Central"/>
</dbReference>
<dbReference type="GO" id="GO:0003723">
    <property type="term" value="F:RNA binding"/>
    <property type="evidence" value="ECO:0000250"/>
    <property type="project" value="FlyBase"/>
</dbReference>
<dbReference type="GO" id="GO:0000398">
    <property type="term" value="P:mRNA splicing, via spliceosome"/>
    <property type="evidence" value="ECO:0000250"/>
    <property type="project" value="UniProtKB"/>
</dbReference>
<dbReference type="GO" id="GO:0000387">
    <property type="term" value="P:spliceosomal snRNP assembly"/>
    <property type="evidence" value="ECO:0000318"/>
    <property type="project" value="GO_Central"/>
</dbReference>
<dbReference type="CDD" id="cd01724">
    <property type="entry name" value="Sm_D1"/>
    <property type="match status" value="1"/>
</dbReference>
<dbReference type="FunFam" id="2.30.30.100:FF:000016">
    <property type="entry name" value="Small nuclear ribonucleoprotein Sm D1"/>
    <property type="match status" value="1"/>
</dbReference>
<dbReference type="Gene3D" id="2.30.30.100">
    <property type="match status" value="1"/>
</dbReference>
<dbReference type="InterPro" id="IPR027141">
    <property type="entry name" value="LSm4/Sm_D1/D3"/>
</dbReference>
<dbReference type="InterPro" id="IPR010920">
    <property type="entry name" value="LSM_dom_sf"/>
</dbReference>
<dbReference type="InterPro" id="IPR047575">
    <property type="entry name" value="Sm"/>
</dbReference>
<dbReference type="InterPro" id="IPR034102">
    <property type="entry name" value="Sm_D1"/>
</dbReference>
<dbReference type="InterPro" id="IPR001163">
    <property type="entry name" value="Sm_dom_euk/arc"/>
</dbReference>
<dbReference type="PANTHER" id="PTHR23338">
    <property type="entry name" value="SMALL NUCLEAR RIBONUCLEOPROTEIN SM"/>
    <property type="match status" value="1"/>
</dbReference>
<dbReference type="Pfam" id="PF01423">
    <property type="entry name" value="LSM"/>
    <property type="match status" value="1"/>
</dbReference>
<dbReference type="SMART" id="SM00651">
    <property type="entry name" value="Sm"/>
    <property type="match status" value="1"/>
</dbReference>
<dbReference type="SUPFAM" id="SSF50182">
    <property type="entry name" value="Sm-like ribonucleoproteins"/>
    <property type="match status" value="1"/>
</dbReference>
<dbReference type="PROSITE" id="PS52002">
    <property type="entry name" value="SM"/>
    <property type="match status" value="1"/>
</dbReference>
<proteinExistence type="evidence at protein level"/>
<gene>
    <name type="primary">SmD1</name>
    <name type="synonym">snRNP69D</name>
    <name type="ORF">CG10753</name>
</gene>
<organism evidence="7">
    <name type="scientific">Drosophila melanogaster</name>
    <name type="common">Fruit fly</name>
    <dbReference type="NCBI Taxonomy" id="7227"/>
    <lineage>
        <taxon>Eukaryota</taxon>
        <taxon>Metazoa</taxon>
        <taxon>Ecdysozoa</taxon>
        <taxon>Arthropoda</taxon>
        <taxon>Hexapoda</taxon>
        <taxon>Insecta</taxon>
        <taxon>Pterygota</taxon>
        <taxon>Neoptera</taxon>
        <taxon>Endopterygota</taxon>
        <taxon>Diptera</taxon>
        <taxon>Brachycera</taxon>
        <taxon>Muscomorpha</taxon>
        <taxon>Ephydroidea</taxon>
        <taxon>Drosophilidae</taxon>
        <taxon>Drosophila</taxon>
        <taxon>Sophophora</taxon>
    </lineage>
</organism>
<evidence type="ECO:0000250" key="1">
    <source>
        <dbReference type="UniProtKB" id="P62314"/>
    </source>
</evidence>
<evidence type="ECO:0000255" key="2">
    <source>
        <dbReference type="PROSITE-ProRule" id="PRU01346"/>
    </source>
</evidence>
<evidence type="ECO:0000256" key="3">
    <source>
        <dbReference type="SAM" id="MobiDB-lite"/>
    </source>
</evidence>
<evidence type="ECO:0000269" key="4">
    <source>
    </source>
</evidence>
<evidence type="ECO:0000269" key="5">
    <source>
    </source>
</evidence>
<evidence type="ECO:0000305" key="6"/>
<evidence type="ECO:0000312" key="7">
    <source>
        <dbReference type="EMBL" id="AAL48981.1"/>
    </source>
</evidence>
<comment type="function">
    <text evidence="1">Plays a role in pre-mRNA splicing as a core component of the spliceosomal U1, U2, U4 and U5 small nuclear ribonucleoproteins (snRNPs), the building blocks of the spliceosome (By similarity).</text>
</comment>
<comment type="subunit">
    <text evidence="5">Interacts with the SMN complex.</text>
</comment>
<comment type="subcellular location">
    <subcellularLocation>
        <location evidence="1">Nucleus</location>
    </subcellularLocation>
    <subcellularLocation>
        <location evidence="1">Cytoplasm</location>
        <location evidence="1">Cytosol</location>
    </subcellularLocation>
</comment>
<comment type="PTM">
    <text evidence="4">Methylated on arginine residues by Art5 and Art7; methylation is not required for assembly and biogenesis of snRNPs.</text>
</comment>
<comment type="similarity">
    <text evidence="6">Belongs to the snRNP core protein family.</text>
</comment>
<reference evidence="6" key="1">
    <citation type="journal article" date="2000" name="Science">
        <title>The genome sequence of Drosophila melanogaster.</title>
        <authorList>
            <person name="Adams M.D."/>
            <person name="Celniker S.E."/>
            <person name="Holt R.A."/>
            <person name="Evans C.A."/>
            <person name="Gocayne J.D."/>
            <person name="Amanatides P.G."/>
            <person name="Scherer S.E."/>
            <person name="Li P.W."/>
            <person name="Hoskins R.A."/>
            <person name="Galle R.F."/>
            <person name="George R.A."/>
            <person name="Lewis S.E."/>
            <person name="Richards S."/>
            <person name="Ashburner M."/>
            <person name="Henderson S.N."/>
            <person name="Sutton G.G."/>
            <person name="Wortman J.R."/>
            <person name="Yandell M.D."/>
            <person name="Zhang Q."/>
            <person name="Chen L.X."/>
            <person name="Brandon R.C."/>
            <person name="Rogers Y.-H.C."/>
            <person name="Blazej R.G."/>
            <person name="Champe M."/>
            <person name="Pfeiffer B.D."/>
            <person name="Wan K.H."/>
            <person name="Doyle C."/>
            <person name="Baxter E.G."/>
            <person name="Helt G."/>
            <person name="Nelson C.R."/>
            <person name="Miklos G.L.G."/>
            <person name="Abril J.F."/>
            <person name="Agbayani A."/>
            <person name="An H.-J."/>
            <person name="Andrews-Pfannkoch C."/>
            <person name="Baldwin D."/>
            <person name="Ballew R.M."/>
            <person name="Basu A."/>
            <person name="Baxendale J."/>
            <person name="Bayraktaroglu L."/>
            <person name="Beasley E.M."/>
            <person name="Beeson K.Y."/>
            <person name="Benos P.V."/>
            <person name="Berman B.P."/>
            <person name="Bhandari D."/>
            <person name="Bolshakov S."/>
            <person name="Borkova D."/>
            <person name="Botchan M.R."/>
            <person name="Bouck J."/>
            <person name="Brokstein P."/>
            <person name="Brottier P."/>
            <person name="Burtis K.C."/>
            <person name="Busam D.A."/>
            <person name="Butler H."/>
            <person name="Cadieu E."/>
            <person name="Center A."/>
            <person name="Chandra I."/>
            <person name="Cherry J.M."/>
            <person name="Cawley S."/>
            <person name="Dahlke C."/>
            <person name="Davenport L.B."/>
            <person name="Davies P."/>
            <person name="de Pablos B."/>
            <person name="Delcher A."/>
            <person name="Deng Z."/>
            <person name="Mays A.D."/>
            <person name="Dew I."/>
            <person name="Dietz S.M."/>
            <person name="Dodson K."/>
            <person name="Doup L.E."/>
            <person name="Downes M."/>
            <person name="Dugan-Rocha S."/>
            <person name="Dunkov B.C."/>
            <person name="Dunn P."/>
            <person name="Durbin K.J."/>
            <person name="Evangelista C.C."/>
            <person name="Ferraz C."/>
            <person name="Ferriera S."/>
            <person name="Fleischmann W."/>
            <person name="Fosler C."/>
            <person name="Gabrielian A.E."/>
            <person name="Garg N.S."/>
            <person name="Gelbart W.M."/>
            <person name="Glasser K."/>
            <person name="Glodek A."/>
            <person name="Gong F."/>
            <person name="Gorrell J.H."/>
            <person name="Gu Z."/>
            <person name="Guan P."/>
            <person name="Harris M."/>
            <person name="Harris N.L."/>
            <person name="Harvey D.A."/>
            <person name="Heiman T.J."/>
            <person name="Hernandez J.R."/>
            <person name="Houck J."/>
            <person name="Hostin D."/>
            <person name="Houston K.A."/>
            <person name="Howland T.J."/>
            <person name="Wei M.-H."/>
            <person name="Ibegwam C."/>
            <person name="Jalali M."/>
            <person name="Kalush F."/>
            <person name="Karpen G.H."/>
            <person name="Ke Z."/>
            <person name="Kennison J.A."/>
            <person name="Ketchum K.A."/>
            <person name="Kimmel B.E."/>
            <person name="Kodira C.D."/>
            <person name="Kraft C.L."/>
            <person name="Kravitz S."/>
            <person name="Kulp D."/>
            <person name="Lai Z."/>
            <person name="Lasko P."/>
            <person name="Lei Y."/>
            <person name="Levitsky A.A."/>
            <person name="Li J.H."/>
            <person name="Li Z."/>
            <person name="Liang Y."/>
            <person name="Lin X."/>
            <person name="Liu X."/>
            <person name="Mattei B."/>
            <person name="McIntosh T.C."/>
            <person name="McLeod M.P."/>
            <person name="McPherson D."/>
            <person name="Merkulov G."/>
            <person name="Milshina N.V."/>
            <person name="Mobarry C."/>
            <person name="Morris J."/>
            <person name="Moshrefi A."/>
            <person name="Mount S.M."/>
            <person name="Moy M."/>
            <person name="Murphy B."/>
            <person name="Murphy L."/>
            <person name="Muzny D.M."/>
            <person name="Nelson D.L."/>
            <person name="Nelson D.R."/>
            <person name="Nelson K.A."/>
            <person name="Nixon K."/>
            <person name="Nusskern D.R."/>
            <person name="Pacleb J.M."/>
            <person name="Palazzolo M."/>
            <person name="Pittman G.S."/>
            <person name="Pan S."/>
            <person name="Pollard J."/>
            <person name="Puri V."/>
            <person name="Reese M.G."/>
            <person name="Reinert K."/>
            <person name="Remington K."/>
            <person name="Saunders R.D.C."/>
            <person name="Scheeler F."/>
            <person name="Shen H."/>
            <person name="Shue B.C."/>
            <person name="Siden-Kiamos I."/>
            <person name="Simpson M."/>
            <person name="Skupski M.P."/>
            <person name="Smith T.J."/>
            <person name="Spier E."/>
            <person name="Spradling A.C."/>
            <person name="Stapleton M."/>
            <person name="Strong R."/>
            <person name="Sun E."/>
            <person name="Svirskas R."/>
            <person name="Tector C."/>
            <person name="Turner R."/>
            <person name="Venter E."/>
            <person name="Wang A.H."/>
            <person name="Wang X."/>
            <person name="Wang Z.-Y."/>
            <person name="Wassarman D.A."/>
            <person name="Weinstock G.M."/>
            <person name="Weissenbach J."/>
            <person name="Williams S.M."/>
            <person name="Woodage T."/>
            <person name="Worley K.C."/>
            <person name="Wu D."/>
            <person name="Yang S."/>
            <person name="Yao Q.A."/>
            <person name="Ye J."/>
            <person name="Yeh R.-F."/>
            <person name="Zaveri J.S."/>
            <person name="Zhan M."/>
            <person name="Zhang G."/>
            <person name="Zhao Q."/>
            <person name="Zheng L."/>
            <person name="Zheng X.H."/>
            <person name="Zhong F.N."/>
            <person name="Zhong W."/>
            <person name="Zhou X."/>
            <person name="Zhu S.C."/>
            <person name="Zhu X."/>
            <person name="Smith H.O."/>
            <person name="Gibbs R.A."/>
            <person name="Myers E.W."/>
            <person name="Rubin G.M."/>
            <person name="Venter J.C."/>
        </authorList>
    </citation>
    <scope>NUCLEOTIDE SEQUENCE [LARGE SCALE GENOMIC DNA]</scope>
    <source>
        <strain>Berkeley</strain>
    </source>
</reference>
<reference key="2">
    <citation type="journal article" date="2002" name="Genome Biol.">
        <title>Annotation of the Drosophila melanogaster euchromatic genome: a systematic review.</title>
        <authorList>
            <person name="Misra S."/>
            <person name="Crosby M.A."/>
            <person name="Mungall C.J."/>
            <person name="Matthews B.B."/>
            <person name="Campbell K.S."/>
            <person name="Hradecky P."/>
            <person name="Huang Y."/>
            <person name="Kaminker J.S."/>
            <person name="Millburn G.H."/>
            <person name="Prochnik S.E."/>
            <person name="Smith C.D."/>
            <person name="Tupy J.L."/>
            <person name="Whitfield E.J."/>
            <person name="Bayraktaroglu L."/>
            <person name="Berman B.P."/>
            <person name="Bettencourt B.R."/>
            <person name="Celniker S.E."/>
            <person name="de Grey A.D.N.J."/>
            <person name="Drysdale R.A."/>
            <person name="Harris N.L."/>
            <person name="Richter J."/>
            <person name="Russo S."/>
            <person name="Schroeder A.J."/>
            <person name="Shu S.Q."/>
            <person name="Stapleton M."/>
            <person name="Yamada C."/>
            <person name="Ashburner M."/>
            <person name="Gelbart W.M."/>
            <person name="Rubin G.M."/>
            <person name="Lewis S.E."/>
        </authorList>
    </citation>
    <scope>GENOME REANNOTATION</scope>
    <source>
        <strain>Berkeley</strain>
    </source>
</reference>
<reference key="3">
    <citation type="journal article" date="2002" name="Genome Biol.">
        <title>A Drosophila full-length cDNA resource.</title>
        <authorList>
            <person name="Stapleton M."/>
            <person name="Carlson J.W."/>
            <person name="Brokstein P."/>
            <person name="Yu C."/>
            <person name="Champe M."/>
            <person name="George R.A."/>
            <person name="Guarin H."/>
            <person name="Kronmiller B."/>
            <person name="Pacleb J.M."/>
            <person name="Park S."/>
            <person name="Wan K.H."/>
            <person name="Rubin G.M."/>
            <person name="Celniker S.E."/>
        </authorList>
    </citation>
    <scope>NUCLEOTIDE SEQUENCE [LARGE SCALE MRNA]</scope>
    <source>
        <strain>Berkeley</strain>
        <tissue>Embryo</tissue>
    </source>
</reference>
<reference evidence="6" key="4">
    <citation type="submission" date="2008-05" db="EMBL/GenBank/DDBJ databases">
        <authorList>
            <person name="Carlson J.W."/>
            <person name="Booth B."/>
            <person name="Frise E."/>
            <person name="Park S."/>
            <person name="Wan K.H."/>
            <person name="Yu C."/>
            <person name="Celniker S.E."/>
        </authorList>
    </citation>
    <scope>NUCLEOTIDE SEQUENCE [LARGE SCALE MRNA]</scope>
    <source>
        <strain>Berkeley</strain>
    </source>
</reference>
<reference key="5">
    <citation type="journal article" date="2008" name="Proc. Natl. Acad. Sci. U.S.A.">
        <title>Evolution of an RNP assembly system: a minimal SMN complex facilitates formation of UsnRNPs in Drosophila melanogaster.</title>
        <authorList>
            <person name="Kroiss M."/>
            <person name="Schultz J."/>
            <person name="Wiesner J."/>
            <person name="Chari A."/>
            <person name="Sickmann A."/>
            <person name="Fischer U."/>
        </authorList>
    </citation>
    <scope>INTERACTION WITH THE SMN COMPLEX</scope>
</reference>
<reference key="6">
    <citation type="journal article" date="2008" name="RNA">
        <title>Sm protein methylation is dispensable for snRNP assembly in Drosophila melanogaster.</title>
        <authorList>
            <person name="Gonsalvez G.B."/>
            <person name="Praveen K."/>
            <person name="Hicks A.J."/>
            <person name="Tian L."/>
            <person name="Matera A.G."/>
        </authorList>
    </citation>
    <scope>METHYLATION</scope>
</reference>
<feature type="chain" id="PRO_0000122204" description="Probable small nuclear ribonucleoprotein Sm D1">
    <location>
        <begin position="1"/>
        <end position="124"/>
    </location>
</feature>
<feature type="domain" description="Sm" evidence="2">
    <location>
        <begin position="2"/>
        <end position="74"/>
    </location>
</feature>
<feature type="repeat" description="1">
    <location>
        <begin position="100"/>
        <end position="101"/>
    </location>
</feature>
<feature type="repeat" description="2">
    <location>
        <begin position="102"/>
        <end position="103"/>
    </location>
</feature>
<feature type="repeat" description="3">
    <location>
        <begin position="104"/>
        <end position="105"/>
    </location>
</feature>
<feature type="repeat" description="4">
    <location>
        <begin position="107"/>
        <end position="108"/>
    </location>
</feature>
<feature type="repeat" description="5">
    <location>
        <begin position="109"/>
        <end position="110"/>
    </location>
</feature>
<feature type="repeat" description="6; approximate">
    <location>
        <begin position="111"/>
        <end position="112"/>
    </location>
</feature>
<feature type="repeat" description="7">
    <location>
        <begin position="113"/>
        <end position="114"/>
    </location>
</feature>
<feature type="repeat" description="8">
    <location>
        <begin position="115"/>
        <end position="116"/>
    </location>
</feature>
<feature type="repeat" description="9">
    <location>
        <begin position="117"/>
        <end position="118"/>
    </location>
</feature>
<feature type="region of interest" description="Disordered" evidence="3">
    <location>
        <begin position="81"/>
        <end position="124"/>
    </location>
</feature>
<feature type="region of interest" description="9 X 2 AA approximate tandem repeats of R-G">
    <location>
        <begin position="100"/>
        <end position="118"/>
    </location>
</feature>
<feature type="compositionally biased region" description="Basic residues" evidence="3">
    <location>
        <begin position="87"/>
        <end position="124"/>
    </location>
</feature>
<feature type="sequence conflict" description="In Ref. 3; AAL48981." evidence="6" ref="3">
    <original>P</original>
    <variation>H</variation>
    <location>
        <position position="52"/>
    </location>
</feature>
<sequence>MKLVRFLMKLSHETVTIELKNGTQIHGTITGVDVAMNTHLKSVRMTIKNRDPVHLETLSIRGNNIRYFILPDSLPLETLLIDDTPKSKTKKKDSGRVGNRGRGRGARGRGGPRGRGRGRASGRR</sequence>